<proteinExistence type="inferred from homology"/>
<name>FSCC_DICDI</name>
<dbReference type="EMBL" id="AAFI02000187">
    <property type="protein sequence ID" value="EAS66815.1"/>
    <property type="molecule type" value="Genomic_DNA"/>
</dbReference>
<dbReference type="RefSeq" id="XP_001134498.1">
    <property type="nucleotide sequence ID" value="XM_001134498.1"/>
</dbReference>
<dbReference type="SMR" id="Q1ZXA7"/>
<dbReference type="FunCoup" id="Q1ZXA7">
    <property type="interactions" value="19"/>
</dbReference>
<dbReference type="GlyCosmos" id="Q1ZXA7">
    <property type="glycosylation" value="1 site, No reported glycans"/>
</dbReference>
<dbReference type="GlyGen" id="Q1ZXA7">
    <property type="glycosylation" value="1 site"/>
</dbReference>
<dbReference type="PaxDb" id="44689-DDB0231626"/>
<dbReference type="EnsemblProtists" id="EAS66815">
    <property type="protein sequence ID" value="EAS66815"/>
    <property type="gene ID" value="DDB_G0292204"/>
</dbReference>
<dbReference type="GeneID" id="8628541"/>
<dbReference type="KEGG" id="ddi:DDB_G0292204"/>
<dbReference type="dictyBase" id="DDB_G0292204">
    <property type="gene designation" value="fscC"/>
</dbReference>
<dbReference type="VEuPathDB" id="AmoebaDB:DDB_G0292204"/>
<dbReference type="eggNOG" id="ENOG502RE4K">
    <property type="taxonomic scope" value="Eukaryota"/>
</dbReference>
<dbReference type="HOGENOM" id="CLU_036764_0_0_1"/>
<dbReference type="InParanoid" id="Q1ZXA7"/>
<dbReference type="OMA" id="RQLWDIE"/>
<dbReference type="PhylomeDB" id="Q1ZXA7"/>
<dbReference type="PRO" id="PR:Q1ZXA7"/>
<dbReference type="Proteomes" id="UP000002195">
    <property type="component" value="Chromosome 6"/>
</dbReference>
<dbReference type="GO" id="GO:0016020">
    <property type="term" value="C:membrane"/>
    <property type="evidence" value="ECO:0007669"/>
    <property type="project" value="UniProtKB-SubCell"/>
</dbReference>
<dbReference type="Gene3D" id="1.20.1070.10">
    <property type="entry name" value="Rhodopsin 7-helix transmembrane proteins"/>
    <property type="match status" value="1"/>
</dbReference>
<dbReference type="InterPro" id="IPR050949">
    <property type="entry name" value="GPCR_Fz/Smo-like"/>
</dbReference>
<dbReference type="PANTHER" id="PTHR31787:SF8">
    <property type="entry name" value="FRIZZLED_SMOOTHENED-LIKE SANS CRD PROTEIN B-RELATED"/>
    <property type="match status" value="1"/>
</dbReference>
<dbReference type="PANTHER" id="PTHR31787">
    <property type="entry name" value="G-PROTEIN-COUPLED RECEPTOR GPCR FAMILY PROTEIN"/>
    <property type="match status" value="1"/>
</dbReference>
<dbReference type="SUPFAM" id="SSF81321">
    <property type="entry name" value="Family A G protein-coupled receptor-like"/>
    <property type="match status" value="1"/>
</dbReference>
<evidence type="ECO:0000255" key="1"/>
<evidence type="ECO:0000256" key="2">
    <source>
        <dbReference type="SAM" id="MobiDB-lite"/>
    </source>
</evidence>
<evidence type="ECO:0000305" key="3"/>
<organism>
    <name type="scientific">Dictyostelium discoideum</name>
    <name type="common">Social amoeba</name>
    <dbReference type="NCBI Taxonomy" id="44689"/>
    <lineage>
        <taxon>Eukaryota</taxon>
        <taxon>Amoebozoa</taxon>
        <taxon>Evosea</taxon>
        <taxon>Eumycetozoa</taxon>
        <taxon>Dictyostelia</taxon>
        <taxon>Dictyosteliales</taxon>
        <taxon>Dictyosteliaceae</taxon>
        <taxon>Dictyostelium</taxon>
    </lineage>
</organism>
<keyword id="KW-0325">Glycoprotein</keyword>
<keyword id="KW-0472">Membrane</keyword>
<keyword id="KW-0675">Receptor</keyword>
<keyword id="KW-1185">Reference proteome</keyword>
<keyword id="KW-0732">Signal</keyword>
<keyword id="KW-0812">Transmembrane</keyword>
<keyword id="KW-1133">Transmembrane helix</keyword>
<gene>
    <name type="primary">fscC</name>
    <name type="ORF">DDB_G0292204</name>
</gene>
<feature type="signal peptide" evidence="1">
    <location>
        <begin position="1"/>
        <end position="25"/>
    </location>
</feature>
<feature type="chain" id="PRO_0000371356" description="Frizzled/smoothened-like sans CRD protein C">
    <location>
        <begin position="26"/>
        <end position="511"/>
    </location>
</feature>
<feature type="topological domain" description="Extracellular" evidence="1">
    <location>
        <begin position="26"/>
        <end position="93"/>
    </location>
</feature>
<feature type="transmembrane region" description="Helical; Name=1" evidence="1">
    <location>
        <begin position="94"/>
        <end position="114"/>
    </location>
</feature>
<feature type="topological domain" description="Cytoplasmic" evidence="1">
    <location>
        <begin position="115"/>
        <end position="122"/>
    </location>
</feature>
<feature type="transmembrane region" description="Helical; Name=2" evidence="1">
    <location>
        <begin position="123"/>
        <end position="143"/>
    </location>
</feature>
<feature type="topological domain" description="Extracellular" evidence="1">
    <location>
        <begin position="144"/>
        <end position="172"/>
    </location>
</feature>
<feature type="transmembrane region" description="Helical; Name=3" evidence="1">
    <location>
        <begin position="173"/>
        <end position="193"/>
    </location>
</feature>
<feature type="topological domain" description="Cytoplasmic" evidence="1">
    <location>
        <begin position="194"/>
        <end position="209"/>
    </location>
</feature>
<feature type="transmembrane region" description="Helical; Name=4" evidence="1">
    <location>
        <begin position="210"/>
        <end position="230"/>
    </location>
</feature>
<feature type="topological domain" description="Extracellular" evidence="1">
    <location>
        <begin position="231"/>
        <end position="253"/>
    </location>
</feature>
<feature type="transmembrane region" description="Helical; Name=5" evidence="1">
    <location>
        <begin position="254"/>
        <end position="274"/>
    </location>
</feature>
<feature type="topological domain" description="Cytoplasmic" evidence="1">
    <location>
        <begin position="275"/>
        <end position="295"/>
    </location>
</feature>
<feature type="transmembrane region" description="Helical; Name=6" evidence="1">
    <location>
        <begin position="296"/>
        <end position="316"/>
    </location>
</feature>
<feature type="topological domain" description="Extracellular" evidence="1">
    <location>
        <begin position="317"/>
        <end position="357"/>
    </location>
</feature>
<feature type="transmembrane region" description="Helical; Name=7" evidence="1">
    <location>
        <begin position="358"/>
        <end position="378"/>
    </location>
</feature>
<feature type="topological domain" description="Cytoplasmic" evidence="1">
    <location>
        <begin position="379"/>
        <end position="511"/>
    </location>
</feature>
<feature type="region of interest" description="Disordered" evidence="2">
    <location>
        <begin position="430"/>
        <end position="511"/>
    </location>
</feature>
<feature type="compositionally biased region" description="Gly residues" evidence="2">
    <location>
        <begin position="433"/>
        <end position="443"/>
    </location>
</feature>
<feature type="compositionally biased region" description="Polar residues" evidence="2">
    <location>
        <begin position="451"/>
        <end position="460"/>
    </location>
</feature>
<feature type="compositionally biased region" description="Low complexity" evidence="2">
    <location>
        <begin position="461"/>
        <end position="485"/>
    </location>
</feature>
<feature type="compositionally biased region" description="Polar residues" evidence="2">
    <location>
        <begin position="486"/>
        <end position="511"/>
    </location>
</feature>
<feature type="glycosylation site" description="N-linked (GlcNAc...) asparagine" evidence="1">
    <location>
        <position position="51"/>
    </location>
</feature>
<protein>
    <recommendedName>
        <fullName>Frizzled/smoothened-like sans CRD protein C</fullName>
    </recommendedName>
</protein>
<sequence length="511" mass="57587">MNQINKFIKNLYLIIITIILIIVISNDNNGLFINGQSLPDGFCPQPLIYRNSTNRKADIDNGYNFVGETNCLLPCPSPLFPKSQWESYFEMSLIMGSISMFASLFLIITYSPLINKKHTRHTVGILCMSIGIFFVMVSDGRQLWDIESPGEYKKYCPDTGRYARQSDTKCLTTGLFFQFGCVTAIGWWSILAVDLWMTIAKKVQTTKKQLLYYLIGINTVSLILTFGPVVKNQYGFGNAAIGCWMLDLKYQYGFFWIPVGICLSVGSVFIGLIFWEIYKISDAVKKRYLKKHIKPLCLIVLMCLEFLYMFIYYSYITANQPTYNKHVAEYIMCLIINAANVPGSYTCQLKTVSPTAQFLFLIAIRLMGLQGLIFYGLTAATKKVWANSWIYKDLLKLFKLFTTKLYNDSSSEEVENSNYSNNNSNYYSSNGYTTGGSDNGVGSGRSDKFTKSSSNGGAQDNNNNNNNNNNNNNNNNNNNNNNNNNSSSLEISGVESNNSTPRVNSPDNLQP</sequence>
<accession>Q1ZXA7</accession>
<comment type="subcellular location">
    <subcellularLocation>
        <location evidence="3">Membrane</location>
        <topology evidence="3">Multi-pass membrane protein</topology>
    </subcellularLocation>
</comment>
<comment type="similarity">
    <text evidence="3">Belongs to the G-protein coupled receptor Fz/Smo family.</text>
</comment>
<reference key="1">
    <citation type="journal article" date="2005" name="Nature">
        <title>The genome of the social amoeba Dictyostelium discoideum.</title>
        <authorList>
            <person name="Eichinger L."/>
            <person name="Pachebat J.A."/>
            <person name="Gloeckner G."/>
            <person name="Rajandream M.A."/>
            <person name="Sucgang R."/>
            <person name="Berriman M."/>
            <person name="Song J."/>
            <person name="Olsen R."/>
            <person name="Szafranski K."/>
            <person name="Xu Q."/>
            <person name="Tunggal B."/>
            <person name="Kummerfeld S."/>
            <person name="Madera M."/>
            <person name="Konfortov B.A."/>
            <person name="Rivero F."/>
            <person name="Bankier A.T."/>
            <person name="Lehmann R."/>
            <person name="Hamlin N."/>
            <person name="Davies R."/>
            <person name="Gaudet P."/>
            <person name="Fey P."/>
            <person name="Pilcher K."/>
            <person name="Chen G."/>
            <person name="Saunders D."/>
            <person name="Sodergren E.J."/>
            <person name="Davis P."/>
            <person name="Kerhornou A."/>
            <person name="Nie X."/>
            <person name="Hall N."/>
            <person name="Anjard C."/>
            <person name="Hemphill L."/>
            <person name="Bason N."/>
            <person name="Farbrother P."/>
            <person name="Desany B."/>
            <person name="Just E."/>
            <person name="Morio T."/>
            <person name="Rost R."/>
            <person name="Churcher C.M."/>
            <person name="Cooper J."/>
            <person name="Haydock S."/>
            <person name="van Driessche N."/>
            <person name="Cronin A."/>
            <person name="Goodhead I."/>
            <person name="Muzny D.M."/>
            <person name="Mourier T."/>
            <person name="Pain A."/>
            <person name="Lu M."/>
            <person name="Harper D."/>
            <person name="Lindsay R."/>
            <person name="Hauser H."/>
            <person name="James K.D."/>
            <person name="Quiles M."/>
            <person name="Madan Babu M."/>
            <person name="Saito T."/>
            <person name="Buchrieser C."/>
            <person name="Wardroper A."/>
            <person name="Felder M."/>
            <person name="Thangavelu M."/>
            <person name="Johnson D."/>
            <person name="Knights A."/>
            <person name="Loulseged H."/>
            <person name="Mungall K.L."/>
            <person name="Oliver K."/>
            <person name="Price C."/>
            <person name="Quail M.A."/>
            <person name="Urushihara H."/>
            <person name="Hernandez J."/>
            <person name="Rabbinowitsch E."/>
            <person name="Steffen D."/>
            <person name="Sanders M."/>
            <person name="Ma J."/>
            <person name="Kohara Y."/>
            <person name="Sharp S."/>
            <person name="Simmonds M.N."/>
            <person name="Spiegler S."/>
            <person name="Tivey A."/>
            <person name="Sugano S."/>
            <person name="White B."/>
            <person name="Walker D."/>
            <person name="Woodward J.R."/>
            <person name="Winckler T."/>
            <person name="Tanaka Y."/>
            <person name="Shaulsky G."/>
            <person name="Schleicher M."/>
            <person name="Weinstock G.M."/>
            <person name="Rosenthal A."/>
            <person name="Cox E.C."/>
            <person name="Chisholm R.L."/>
            <person name="Gibbs R.A."/>
            <person name="Loomis W.F."/>
            <person name="Platzer M."/>
            <person name="Kay R.R."/>
            <person name="Williams J.G."/>
            <person name="Dear P.H."/>
            <person name="Noegel A.A."/>
            <person name="Barrell B.G."/>
            <person name="Kuspa A."/>
        </authorList>
    </citation>
    <scope>NUCLEOTIDE SEQUENCE [LARGE SCALE GENOMIC DNA]</scope>
    <source>
        <strain>AX4</strain>
    </source>
</reference>
<reference key="2">
    <citation type="journal article" date="2006" name="Eur. J. Cell Biol.">
        <title>The Dictyostelium repertoire of seven transmembrane domain receptors.</title>
        <authorList>
            <person name="Prabhu Y."/>
            <person name="Eichinger L."/>
        </authorList>
    </citation>
    <scope>NOMENCLATURE</scope>
</reference>